<gene>
    <name type="primary">apcA</name>
    <name type="ordered locus">SYNPCC7002_A1930</name>
</gene>
<sequence>MSIVTKSIVNADAEARYLSPGELDRIKAFVTSGESRLRIAETLTGSRERIIKSAGDALFQKRPDVVSPGGNAYGEEMTATCLRDMDYYLRLITYGVVAGDVTPIEEIGLVGVREMYKSLGTPVDAVAQAVREMKAVATGMMSGDDAAEAGAYFDYVIGAME</sequence>
<keyword id="KW-0002">3D-structure</keyword>
<keyword id="KW-0042">Antenna complex</keyword>
<keyword id="KW-0089">Bile pigment</keyword>
<keyword id="KW-0157">Chromophore</keyword>
<keyword id="KW-0249">Electron transport</keyword>
<keyword id="KW-0472">Membrane</keyword>
<keyword id="KW-0602">Photosynthesis</keyword>
<keyword id="KW-0605">Phycobilisome</keyword>
<keyword id="KW-1185">Reference proteome</keyword>
<keyword id="KW-0793">Thylakoid</keyword>
<keyword id="KW-0813">Transport</keyword>
<evidence type="ECO:0000250" key="1"/>
<evidence type="ECO:0000269" key="2">
    <source>
    </source>
</evidence>
<evidence type="ECO:0000305" key="3"/>
<comment type="function">
    <text evidence="1">Light-harvesting photosynthetic bile pigment-protein from the phycobiliprotein complex. Allophycocyanin has a maximum absorption at approximately 650 nanometers (By similarity).</text>
</comment>
<comment type="subunit">
    <text evidence="1">Heterodimer of an alpha and a beta chain.</text>
</comment>
<comment type="subcellular location">
    <subcellularLocation>
        <location evidence="1">Cellular thylakoid membrane</location>
        <topology evidence="1">Peripheral membrane protein</topology>
        <orientation evidence="1">Cytoplasmic side</orientation>
    </subcellularLocation>
    <text evidence="1">Forms the core of the phycobilisome.</text>
</comment>
<comment type="PTM">
    <text>Contains one covalently linked phycocyanobilin chromophore. The chromophore on position 81 is added by the phycocyanobilin lyase CpcUS.</text>
</comment>
<comment type="mass spectrometry">
    <text>The measured mass is that of the protein without the N-terminal Met plus one covalently linked phycocyanobilin chromophore.</text>
</comment>
<comment type="similarity">
    <text evidence="3">Belongs to the phycobiliprotein family.</text>
</comment>
<accession>B1XQM2</accession>
<accession>O68969</accession>
<organism>
    <name type="scientific">Picosynechococcus sp. (strain ATCC 27264 / PCC 7002 / PR-6)</name>
    <name type="common">Agmenellum quadruplicatum</name>
    <dbReference type="NCBI Taxonomy" id="32049"/>
    <lineage>
        <taxon>Bacteria</taxon>
        <taxon>Bacillati</taxon>
        <taxon>Cyanobacteriota</taxon>
        <taxon>Cyanophyceae</taxon>
        <taxon>Oscillatoriophycideae</taxon>
        <taxon>Chroococcales</taxon>
        <taxon>Geminocystaceae</taxon>
        <taxon>Picosynechococcus</taxon>
    </lineage>
</organism>
<dbReference type="EMBL" id="AF059339">
    <property type="protein sequence ID" value="AAC14719.1"/>
    <property type="molecule type" value="Genomic_DNA"/>
</dbReference>
<dbReference type="EMBL" id="CP000951">
    <property type="protein sequence ID" value="ACA99917.1"/>
    <property type="molecule type" value="Genomic_DNA"/>
</dbReference>
<dbReference type="RefSeq" id="WP_012307540.1">
    <property type="nucleotide sequence ID" value="NZ_JAHHPU010000002.1"/>
</dbReference>
<dbReference type="PDB" id="7EXT">
    <property type="method" value="EM"/>
    <property type="resolution" value="3.50 A"/>
    <property type="chains" value="A7/C7/E7/G3/H7/I3/J7/K3/L7/N3/O7/P3/Q7/R3/S7/T3/V7/X3/X7/Z3/Z7/b3/d3/f3/i3/k3/o3/q3/s3/u3=1-161"/>
</dbReference>
<dbReference type="PDBsum" id="7EXT"/>
<dbReference type="EMDB" id="EMD-31373"/>
<dbReference type="SMR" id="B1XQM2"/>
<dbReference type="STRING" id="32049.SYNPCC7002_A1930"/>
<dbReference type="KEGG" id="syp:SYNPCC7002_A1930"/>
<dbReference type="eggNOG" id="ENOG502Z7RG">
    <property type="taxonomic scope" value="Bacteria"/>
</dbReference>
<dbReference type="HOGENOM" id="CLU_104219_2_0_3"/>
<dbReference type="Proteomes" id="UP000001688">
    <property type="component" value="Chromosome"/>
</dbReference>
<dbReference type="GO" id="GO:0030089">
    <property type="term" value="C:phycobilisome"/>
    <property type="evidence" value="ECO:0007669"/>
    <property type="project" value="UniProtKB-KW"/>
</dbReference>
<dbReference type="GO" id="GO:0031676">
    <property type="term" value="C:plasma membrane-derived thylakoid membrane"/>
    <property type="evidence" value="ECO:0007669"/>
    <property type="project" value="UniProtKB-SubCell"/>
</dbReference>
<dbReference type="GO" id="GO:0015979">
    <property type="term" value="P:photosynthesis"/>
    <property type="evidence" value="ECO:0007669"/>
    <property type="project" value="UniProtKB-KW"/>
</dbReference>
<dbReference type="CDD" id="cd12125">
    <property type="entry name" value="APC_alpha"/>
    <property type="match status" value="1"/>
</dbReference>
<dbReference type="Gene3D" id="1.10.490.20">
    <property type="entry name" value="Phycocyanins"/>
    <property type="match status" value="1"/>
</dbReference>
<dbReference type="InterPro" id="IPR009050">
    <property type="entry name" value="Globin-like_sf"/>
</dbReference>
<dbReference type="InterPro" id="IPR012128">
    <property type="entry name" value="Phycobilisome_asu/bsu"/>
</dbReference>
<dbReference type="InterPro" id="IPR038719">
    <property type="entry name" value="Phycobilisome_asu/bsu_sf"/>
</dbReference>
<dbReference type="PANTHER" id="PTHR34011:SF2">
    <property type="entry name" value="ALLOPHYCOCYANIN ALPHA CHAIN"/>
    <property type="match status" value="1"/>
</dbReference>
<dbReference type="PANTHER" id="PTHR34011">
    <property type="entry name" value="PHYCOBILISOME 32.1 KDA LINKER POLYPEPTIDE, PHYCOCYANIN-ASSOCIATED, ROD 2-RELATED"/>
    <property type="match status" value="1"/>
</dbReference>
<dbReference type="Pfam" id="PF00502">
    <property type="entry name" value="Phycobilisome"/>
    <property type="match status" value="1"/>
</dbReference>
<dbReference type="PIRSF" id="PIRSF000081">
    <property type="entry name" value="Phycocyanin"/>
    <property type="match status" value="1"/>
</dbReference>
<dbReference type="SUPFAM" id="SSF46458">
    <property type="entry name" value="Globin-like"/>
    <property type="match status" value="1"/>
</dbReference>
<name>PHAA_PICP2</name>
<feature type="initiator methionine" description="Removed" evidence="3">
    <location>
        <position position="1"/>
    </location>
</feature>
<feature type="chain" id="PRO_0000403175" description="Allophycocyanin alpha subunit">
    <location>
        <begin position="2"/>
        <end position="161"/>
    </location>
</feature>
<feature type="binding site" description="covalent" evidence="3">
    <location>
        <position position="81"/>
    </location>
    <ligand>
        <name>(2R,3E)-phycocyanobilin</name>
        <dbReference type="ChEBI" id="CHEBI:85275"/>
    </ligand>
</feature>
<feature type="sequence conflict" description="In Ref. 1; AAC14719." evidence="3" ref="1">
    <original>T</original>
    <variation>N</variation>
    <location>
        <position position="42"/>
    </location>
</feature>
<proteinExistence type="evidence at protein level"/>
<protein>
    <recommendedName>
        <fullName>Allophycocyanin alpha subunit</fullName>
    </recommendedName>
</protein>
<reference key="1">
    <citation type="submission" date="1998-04" db="EMBL/GenBank/DDBJ databases">
        <title>Cloning and characterization of the apcABC operon of Synechococcus sp. PCC 7002.</title>
        <authorList>
            <person name="Zhou J."/>
            <person name="Stirewalt V.L."/>
            <person name="Bryant D.A."/>
        </authorList>
    </citation>
    <scope>NUCLEOTIDE SEQUENCE [GENOMIC DNA]</scope>
    <source>
        <strain>ATCC 27264 / PCC 7002 / PR-6</strain>
    </source>
</reference>
<reference key="2">
    <citation type="submission" date="2008-02" db="EMBL/GenBank/DDBJ databases">
        <title>Complete sequence of Synechococcus sp. PCC 7002.</title>
        <authorList>
            <person name="Li T."/>
            <person name="Zhao J."/>
            <person name="Zhao C."/>
            <person name="Liu Z."/>
            <person name="Zhao F."/>
            <person name="Marquardt J."/>
            <person name="Nomura C.T."/>
            <person name="Persson S."/>
            <person name="Detter J.C."/>
            <person name="Richardson P.M."/>
            <person name="Lanz C."/>
            <person name="Schuster S.C."/>
            <person name="Wang J."/>
            <person name="Li S."/>
            <person name="Huang X."/>
            <person name="Cai T."/>
            <person name="Yu Z."/>
            <person name="Luo J."/>
            <person name="Zhao J."/>
            <person name="Bryant D.A."/>
        </authorList>
    </citation>
    <scope>NUCLEOTIDE SEQUENCE [LARGE SCALE GENOMIC DNA]</scope>
    <source>
        <strain>ATCC 27264 / PCC 7002 / PR-6</strain>
    </source>
</reference>
<reference key="3">
    <citation type="journal article" date="2008" name="J. Biol. Chem.">
        <title>Biogenesis of phycobiliproteins: I. cpcS-I and cpcU mutants of the cyanobacterium Synechococcus sp. PCC 7002 define a heterodimeric phyococyanobilin lyase specific for beta-phycocyanin and allophycocyanin subunits.</title>
        <authorList>
            <person name="Shen G."/>
            <person name="Schluchter W.M."/>
            <person name="Bryant D.A."/>
        </authorList>
    </citation>
    <scope>MASS SPECTROMETRY</scope>
    <scope>CHROMOPHORE ATTACHMENT</scope>
    <source>
        <strain>ATCC 27264 / PCC 7002 / PR-6</strain>
    </source>
</reference>